<feature type="chain" id="PRO_0000328075" description="Protein SEC13 homolog">
    <location>
        <begin position="1"/>
        <end position="301"/>
    </location>
</feature>
<feature type="repeat" description="WD 1">
    <location>
        <begin position="9"/>
        <end position="48"/>
    </location>
</feature>
<feature type="repeat" description="WD 2">
    <location>
        <begin position="53"/>
        <end position="94"/>
    </location>
</feature>
<feature type="repeat" description="WD 3">
    <location>
        <begin position="100"/>
        <end position="141"/>
    </location>
</feature>
<feature type="repeat" description="WD 4">
    <location>
        <begin position="146"/>
        <end position="202"/>
    </location>
</feature>
<feature type="repeat" description="WD 5">
    <location>
        <begin position="207"/>
        <end position="250"/>
    </location>
</feature>
<feature type="repeat" description="WD 6">
    <location>
        <begin position="255"/>
        <end position="294"/>
    </location>
</feature>
<sequence length="301" mass="33602">MATQNVDSGHEDMVHDAQFDYYGKFLATCSSDKMIKIFDVGGENPQHLVDLRGHEGPVWQVAWAHPKFGKILASASYDRKVIVWKEVGNNSWSIIHQYAGHELSVNSISWAPHEFGLSLACASSDGSVTIHNYNNNVWEAPQKIQVSQIGVNSVSWSPAAIPTSLVNSANTIIPAPIKRIVTGSCDNLIKIFKNVEDKWILDKQLEDHKDWVRDVAWAPNIGLPYSKIASCSQDRSVIVWTQDENGVWSGKPLPKFDDIVWRVSWSVIGNILAVSCGDNQVTLWKEGVDSEWKLISHVENN</sequence>
<evidence type="ECO:0000250" key="1">
    <source>
        <dbReference type="UniProtKB" id="P55735"/>
    </source>
</evidence>
<evidence type="ECO:0000305" key="2"/>
<protein>
    <recommendedName>
        <fullName evidence="2">Protein SEC13 homolog</fullName>
    </recommendedName>
    <alternativeName>
        <fullName evidence="2">GATOR complex protein SEC13</fullName>
    </alternativeName>
</protein>
<organism>
    <name type="scientific">Dictyostelium discoideum</name>
    <name type="common">Social amoeba</name>
    <dbReference type="NCBI Taxonomy" id="44689"/>
    <lineage>
        <taxon>Eukaryota</taxon>
        <taxon>Amoebozoa</taxon>
        <taxon>Evosea</taxon>
        <taxon>Eumycetozoa</taxon>
        <taxon>Dictyostelia</taxon>
        <taxon>Dictyosteliales</taxon>
        <taxon>Dictyosteliaceae</taxon>
        <taxon>Dictyostelium</taxon>
    </lineage>
</organism>
<proteinExistence type="evidence at protein level"/>
<comment type="function">
    <text evidence="1">Component of the coat protein complex II (COPII) which promotes the formation of transport vesicles from the endoplasmic reticulum (ER). The coat has two main functions, the physical deformation of the endoplasmic reticulum membrane into vesicles and the selection of cargo molecules. It also functions as a component of the nuclear pore complex (NPC). NPC components, collectively referred to as nucleoporins (NUPs), can play the role of both NPC structural components and of docking or interaction partners for transiently associated nuclear transport factors. SEC13 is required for efficient mRNA export from the nucleus to the cytoplasm and for correct nuclear pore biogenesis and distribution.</text>
</comment>
<comment type="function">
    <text>As a component of the GATOR complex may function in the amino acid-sensing branch of the TORC1 signaling pathway.</text>
</comment>
<comment type="subunit">
    <text evidence="1">Component of the COPII coat composed of at least 5 proteins: the sec23/24 complex, the sec13/31 complex, and the protein sar1A or sar1B. Component of the nuclear pore complex (NPC) which constitutes the exclusive means of nucleocytoplasmic transport. Probably part of the GATOR complex.</text>
</comment>
<comment type="subcellular location">
    <subcellularLocation>
        <location evidence="1">Cytoplasmic vesicle</location>
        <location evidence="1">COPII-coated vesicle membrane</location>
        <topology evidence="1">Peripheral membrane protein</topology>
        <orientation evidence="1">Cytoplasmic side</orientation>
    </subcellularLocation>
    <subcellularLocation>
        <location evidence="1">Endoplasmic reticulum membrane</location>
        <topology evidence="1">Peripheral membrane protein</topology>
        <orientation evidence="1">Cytoplasmic side</orientation>
    </subcellularLocation>
    <subcellularLocation>
        <location evidence="1">Nucleus</location>
        <location evidence="1">Nuclear pore complex</location>
    </subcellularLocation>
    <subcellularLocation>
        <location evidence="1">Lysosome membrane</location>
    </subcellularLocation>
</comment>
<comment type="miscellaneous">
    <text>Present with 21400 molecules/cell in log phase SD medium.</text>
</comment>
<comment type="similarity">
    <text evidence="2">Belongs to the WD repeat SEC13 family.</text>
</comment>
<name>SEC13_DICDI</name>
<gene>
    <name type="primary">sec13</name>
    <name type="ORF">DDB_G0292052</name>
</gene>
<keyword id="KW-0002">3D-structure</keyword>
<keyword id="KW-0968">Cytoplasmic vesicle</keyword>
<keyword id="KW-0256">Endoplasmic reticulum</keyword>
<keyword id="KW-0931">ER-Golgi transport</keyword>
<keyword id="KW-0458">Lysosome</keyword>
<keyword id="KW-0472">Membrane</keyword>
<keyword id="KW-0509">mRNA transport</keyword>
<keyword id="KW-0906">Nuclear pore complex</keyword>
<keyword id="KW-0539">Nucleus</keyword>
<keyword id="KW-0653">Protein transport</keyword>
<keyword id="KW-1185">Reference proteome</keyword>
<keyword id="KW-0677">Repeat</keyword>
<keyword id="KW-0811">Translocation</keyword>
<keyword id="KW-0813">Transport</keyword>
<keyword id="KW-0853">WD repeat</keyword>
<reference key="1">
    <citation type="journal article" date="2005" name="Nature">
        <title>The genome of the social amoeba Dictyostelium discoideum.</title>
        <authorList>
            <person name="Eichinger L."/>
            <person name="Pachebat J.A."/>
            <person name="Gloeckner G."/>
            <person name="Rajandream M.A."/>
            <person name="Sucgang R."/>
            <person name="Berriman M."/>
            <person name="Song J."/>
            <person name="Olsen R."/>
            <person name="Szafranski K."/>
            <person name="Xu Q."/>
            <person name="Tunggal B."/>
            <person name="Kummerfeld S."/>
            <person name="Madera M."/>
            <person name="Konfortov B.A."/>
            <person name="Rivero F."/>
            <person name="Bankier A.T."/>
            <person name="Lehmann R."/>
            <person name="Hamlin N."/>
            <person name="Davies R."/>
            <person name="Gaudet P."/>
            <person name="Fey P."/>
            <person name="Pilcher K."/>
            <person name="Chen G."/>
            <person name="Saunders D."/>
            <person name="Sodergren E.J."/>
            <person name="Davis P."/>
            <person name="Kerhornou A."/>
            <person name="Nie X."/>
            <person name="Hall N."/>
            <person name="Anjard C."/>
            <person name="Hemphill L."/>
            <person name="Bason N."/>
            <person name="Farbrother P."/>
            <person name="Desany B."/>
            <person name="Just E."/>
            <person name="Morio T."/>
            <person name="Rost R."/>
            <person name="Churcher C.M."/>
            <person name="Cooper J."/>
            <person name="Haydock S."/>
            <person name="van Driessche N."/>
            <person name="Cronin A."/>
            <person name="Goodhead I."/>
            <person name="Muzny D.M."/>
            <person name="Mourier T."/>
            <person name="Pain A."/>
            <person name="Lu M."/>
            <person name="Harper D."/>
            <person name="Lindsay R."/>
            <person name="Hauser H."/>
            <person name="James K.D."/>
            <person name="Quiles M."/>
            <person name="Madan Babu M."/>
            <person name="Saito T."/>
            <person name="Buchrieser C."/>
            <person name="Wardroper A."/>
            <person name="Felder M."/>
            <person name="Thangavelu M."/>
            <person name="Johnson D."/>
            <person name="Knights A."/>
            <person name="Loulseged H."/>
            <person name="Mungall K.L."/>
            <person name="Oliver K."/>
            <person name="Price C."/>
            <person name="Quail M.A."/>
            <person name="Urushihara H."/>
            <person name="Hernandez J."/>
            <person name="Rabbinowitsch E."/>
            <person name="Steffen D."/>
            <person name="Sanders M."/>
            <person name="Ma J."/>
            <person name="Kohara Y."/>
            <person name="Sharp S."/>
            <person name="Simmonds M.N."/>
            <person name="Spiegler S."/>
            <person name="Tivey A."/>
            <person name="Sugano S."/>
            <person name="White B."/>
            <person name="Walker D."/>
            <person name="Woodward J.R."/>
            <person name="Winckler T."/>
            <person name="Tanaka Y."/>
            <person name="Shaulsky G."/>
            <person name="Schleicher M."/>
            <person name="Weinstock G.M."/>
            <person name="Rosenthal A."/>
            <person name="Cox E.C."/>
            <person name="Chisholm R.L."/>
            <person name="Gibbs R.A."/>
            <person name="Loomis W.F."/>
            <person name="Platzer M."/>
            <person name="Kay R.R."/>
            <person name="Williams J.G."/>
            <person name="Dear P.H."/>
            <person name="Noegel A.A."/>
            <person name="Barrell B.G."/>
            <person name="Kuspa A."/>
        </authorList>
    </citation>
    <scope>NUCLEOTIDE SEQUENCE [LARGE SCALE GENOMIC DNA]</scope>
    <source>
        <strain>AX4</strain>
    </source>
</reference>
<accession>Q54DS8</accession>
<dbReference type="EMBL" id="AAFI02000187">
    <property type="protein sequence ID" value="EAL61382.1"/>
    <property type="molecule type" value="Genomic_DNA"/>
</dbReference>
<dbReference type="RefSeq" id="XP_629794.1">
    <property type="nucleotide sequence ID" value="XM_629792.1"/>
</dbReference>
<dbReference type="PDB" id="9HCJ">
    <property type="method" value="EM"/>
    <property type="resolution" value="30.00 A"/>
    <property type="chains" value="N0/N1/N2/N3=1-301"/>
</dbReference>
<dbReference type="PDBsum" id="9HCJ"/>
<dbReference type="SMR" id="Q54DS8"/>
<dbReference type="FunCoup" id="Q54DS8">
    <property type="interactions" value="1177"/>
</dbReference>
<dbReference type="STRING" id="44689.Q54DS8"/>
<dbReference type="PaxDb" id="44689-DDB0235182"/>
<dbReference type="EnsemblProtists" id="EAL61382">
    <property type="protein sequence ID" value="EAL61382"/>
    <property type="gene ID" value="DDB_G0292052"/>
</dbReference>
<dbReference type="GeneID" id="8628472"/>
<dbReference type="KEGG" id="ddi:DDB_G0292052"/>
<dbReference type="dictyBase" id="DDB_G0292052">
    <property type="gene designation" value="sec13"/>
</dbReference>
<dbReference type="VEuPathDB" id="AmoebaDB:DDB_G0292052"/>
<dbReference type="eggNOG" id="KOG1332">
    <property type="taxonomic scope" value="Eukaryota"/>
</dbReference>
<dbReference type="HOGENOM" id="CLU_032441_0_1_1"/>
<dbReference type="InParanoid" id="Q54DS8"/>
<dbReference type="OMA" id="IWKEEGD"/>
<dbReference type="PhylomeDB" id="Q54DS8"/>
<dbReference type="Reactome" id="R-DDI-204005">
    <property type="pathway name" value="COPII-mediated vesicle transport"/>
</dbReference>
<dbReference type="Reactome" id="R-DDI-9639288">
    <property type="pathway name" value="Amino acids regulate mTORC1"/>
</dbReference>
<dbReference type="PRO" id="PR:Q54DS8"/>
<dbReference type="Proteomes" id="UP000002195">
    <property type="component" value="Chromosome 6"/>
</dbReference>
<dbReference type="GO" id="GO:0030127">
    <property type="term" value="C:COPII vesicle coat"/>
    <property type="evidence" value="ECO:0000250"/>
    <property type="project" value="dictyBase"/>
</dbReference>
<dbReference type="GO" id="GO:0005789">
    <property type="term" value="C:endoplasmic reticulum membrane"/>
    <property type="evidence" value="ECO:0007669"/>
    <property type="project" value="UniProtKB-SubCell"/>
</dbReference>
<dbReference type="GO" id="GO:0005765">
    <property type="term" value="C:lysosomal membrane"/>
    <property type="evidence" value="ECO:0007669"/>
    <property type="project" value="UniProtKB-SubCell"/>
</dbReference>
<dbReference type="GO" id="GO:0005643">
    <property type="term" value="C:nuclear pore"/>
    <property type="evidence" value="ECO:0000250"/>
    <property type="project" value="dictyBase"/>
</dbReference>
<dbReference type="GO" id="GO:0031080">
    <property type="term" value="C:nuclear pore outer ring"/>
    <property type="evidence" value="ECO:0000318"/>
    <property type="project" value="GO_Central"/>
</dbReference>
<dbReference type="GO" id="GO:0005198">
    <property type="term" value="F:structural molecule activity"/>
    <property type="evidence" value="ECO:0000318"/>
    <property type="project" value="GO_Central"/>
</dbReference>
<dbReference type="GO" id="GO:0090114">
    <property type="term" value="P:COPII-coated vesicle budding"/>
    <property type="evidence" value="ECO:0000318"/>
    <property type="project" value="GO_Central"/>
</dbReference>
<dbReference type="GO" id="GO:0006888">
    <property type="term" value="P:endoplasmic reticulum to Golgi vesicle-mediated transport"/>
    <property type="evidence" value="ECO:0000250"/>
    <property type="project" value="dictyBase"/>
</dbReference>
<dbReference type="GO" id="GO:0051028">
    <property type="term" value="P:mRNA transport"/>
    <property type="evidence" value="ECO:0007669"/>
    <property type="project" value="UniProtKB-KW"/>
</dbReference>
<dbReference type="GO" id="GO:0032008">
    <property type="term" value="P:positive regulation of TOR signaling"/>
    <property type="evidence" value="ECO:0000318"/>
    <property type="project" value="GO_Central"/>
</dbReference>
<dbReference type="GO" id="GO:0032527">
    <property type="term" value="P:protein exit from endoplasmic reticulum"/>
    <property type="evidence" value="ECO:0000318"/>
    <property type="project" value="GO_Central"/>
</dbReference>
<dbReference type="GO" id="GO:0006606">
    <property type="term" value="P:protein import into nucleus"/>
    <property type="evidence" value="ECO:0000318"/>
    <property type="project" value="GO_Central"/>
</dbReference>
<dbReference type="FunFam" id="2.130.10.10:FF:000904">
    <property type="entry name" value="Probable SEC13-protein transport protein"/>
    <property type="match status" value="1"/>
</dbReference>
<dbReference type="Gene3D" id="2.130.10.10">
    <property type="entry name" value="YVTN repeat-like/Quinoprotein amine dehydrogenase"/>
    <property type="match status" value="1"/>
</dbReference>
<dbReference type="InterPro" id="IPR037363">
    <property type="entry name" value="Sec13/Seh1_fam"/>
</dbReference>
<dbReference type="InterPro" id="IPR015943">
    <property type="entry name" value="WD40/YVTN_repeat-like_dom_sf"/>
</dbReference>
<dbReference type="InterPro" id="IPR036322">
    <property type="entry name" value="WD40_repeat_dom_sf"/>
</dbReference>
<dbReference type="InterPro" id="IPR001680">
    <property type="entry name" value="WD40_rpt"/>
</dbReference>
<dbReference type="PANTHER" id="PTHR11024">
    <property type="entry name" value="NUCLEAR PORE COMPLEX PROTEIN SEC13 / SEH1 FAMILY MEMBER"/>
    <property type="match status" value="1"/>
</dbReference>
<dbReference type="PANTHER" id="PTHR11024:SF2">
    <property type="entry name" value="PROTEIN SEC13 HOMOLOG"/>
    <property type="match status" value="1"/>
</dbReference>
<dbReference type="Pfam" id="PF00400">
    <property type="entry name" value="WD40"/>
    <property type="match status" value="5"/>
</dbReference>
<dbReference type="SMART" id="SM00320">
    <property type="entry name" value="WD40"/>
    <property type="match status" value="6"/>
</dbReference>
<dbReference type="SUPFAM" id="SSF50978">
    <property type="entry name" value="WD40 repeat-like"/>
    <property type="match status" value="1"/>
</dbReference>
<dbReference type="PROSITE" id="PS50082">
    <property type="entry name" value="WD_REPEATS_2"/>
    <property type="match status" value="3"/>
</dbReference>
<dbReference type="PROSITE" id="PS50294">
    <property type="entry name" value="WD_REPEATS_REGION"/>
    <property type="match status" value="1"/>
</dbReference>